<comment type="function">
    <text evidence="1">Regulates the transcription of the copA and cueO genes. It detects cytoplasmic copper stress and activates transcription in response to increasing copper concentrations (By similarity).</text>
</comment>
<comment type="subunit">
    <text evidence="1">Homodimer.</text>
</comment>
<comment type="subcellular location">
    <subcellularLocation>
        <location evidence="3">Cytoplasm</location>
    </subcellularLocation>
</comment>
<comment type="domain">
    <text evidence="1">It contains a N-terminal DNA binding region and a C-terminal metal binding region.</text>
</comment>
<organism>
    <name type="scientific">Escherichia coli O6:H1 (strain CFT073 / ATCC 700928 / UPEC)</name>
    <dbReference type="NCBI Taxonomy" id="199310"/>
    <lineage>
        <taxon>Bacteria</taxon>
        <taxon>Pseudomonadati</taxon>
        <taxon>Pseudomonadota</taxon>
        <taxon>Gammaproteobacteria</taxon>
        <taxon>Enterobacterales</taxon>
        <taxon>Enterobacteriaceae</taxon>
        <taxon>Escherichia</taxon>
    </lineage>
</organism>
<proteinExistence type="inferred from homology"/>
<name>CUER_ECOL6</name>
<keyword id="KW-0010">Activator</keyword>
<keyword id="KW-0186">Copper</keyword>
<keyword id="KW-0963">Cytoplasm</keyword>
<keyword id="KW-0238">DNA-binding</keyword>
<keyword id="KW-0479">Metal-binding</keyword>
<keyword id="KW-1185">Reference proteome</keyword>
<keyword id="KW-0804">Transcription</keyword>
<keyword id="KW-0805">Transcription regulation</keyword>
<dbReference type="EMBL" id="AE014075">
    <property type="protein sequence ID" value="AAN79085.1"/>
    <property type="molecule type" value="Genomic_DNA"/>
</dbReference>
<dbReference type="RefSeq" id="WP_001026743.1">
    <property type="nucleotide sequence ID" value="NZ_CP051263.1"/>
</dbReference>
<dbReference type="SMR" id="Q8FK74"/>
<dbReference type="STRING" id="199310.c0607"/>
<dbReference type="KEGG" id="ecc:c0607"/>
<dbReference type="eggNOG" id="COG0789">
    <property type="taxonomic scope" value="Bacteria"/>
</dbReference>
<dbReference type="HOGENOM" id="CLU_060077_2_0_6"/>
<dbReference type="BioCyc" id="ECOL199310:C0607-MONOMER"/>
<dbReference type="Proteomes" id="UP000001410">
    <property type="component" value="Chromosome"/>
</dbReference>
<dbReference type="GO" id="GO:0005737">
    <property type="term" value="C:cytoplasm"/>
    <property type="evidence" value="ECO:0007669"/>
    <property type="project" value="UniProtKB-SubCell"/>
</dbReference>
<dbReference type="GO" id="GO:0005507">
    <property type="term" value="F:copper ion binding"/>
    <property type="evidence" value="ECO:0007669"/>
    <property type="project" value="InterPro"/>
</dbReference>
<dbReference type="GO" id="GO:0003677">
    <property type="term" value="F:DNA binding"/>
    <property type="evidence" value="ECO:0007669"/>
    <property type="project" value="UniProtKB-KW"/>
</dbReference>
<dbReference type="GO" id="GO:0003700">
    <property type="term" value="F:DNA-binding transcription factor activity"/>
    <property type="evidence" value="ECO:0007669"/>
    <property type="project" value="InterPro"/>
</dbReference>
<dbReference type="GO" id="GO:0045893">
    <property type="term" value="P:positive regulation of DNA-templated transcription"/>
    <property type="evidence" value="ECO:0007669"/>
    <property type="project" value="InterPro"/>
</dbReference>
<dbReference type="CDD" id="cd01108">
    <property type="entry name" value="HTH_CueR"/>
    <property type="match status" value="1"/>
</dbReference>
<dbReference type="FunFam" id="1.10.1660.10:FF:000001">
    <property type="entry name" value="Cu(I)-responsive transcriptional regulator"/>
    <property type="match status" value="1"/>
</dbReference>
<dbReference type="Gene3D" id="1.10.1660.10">
    <property type="match status" value="1"/>
</dbReference>
<dbReference type="InterPro" id="IPR011789">
    <property type="entry name" value="CueR"/>
</dbReference>
<dbReference type="InterPro" id="IPR009061">
    <property type="entry name" value="DNA-bd_dom_put_sf"/>
</dbReference>
<dbReference type="InterPro" id="IPR000551">
    <property type="entry name" value="MerR-type_HTH_dom"/>
</dbReference>
<dbReference type="InterPro" id="IPR047057">
    <property type="entry name" value="MerR_fam"/>
</dbReference>
<dbReference type="NCBIfam" id="TIGR02044">
    <property type="entry name" value="CueR"/>
    <property type="match status" value="1"/>
</dbReference>
<dbReference type="NCBIfam" id="NF007590">
    <property type="entry name" value="PRK10227.1"/>
    <property type="match status" value="1"/>
</dbReference>
<dbReference type="PANTHER" id="PTHR30204:SF16">
    <property type="entry name" value="HTH-TYPE TRANSCRIPTIONAL REGULATOR CUER"/>
    <property type="match status" value="1"/>
</dbReference>
<dbReference type="PANTHER" id="PTHR30204">
    <property type="entry name" value="REDOX-CYCLING DRUG-SENSING TRANSCRIPTIONAL ACTIVATOR SOXR"/>
    <property type="match status" value="1"/>
</dbReference>
<dbReference type="Pfam" id="PF13411">
    <property type="entry name" value="MerR_1"/>
    <property type="match status" value="1"/>
</dbReference>
<dbReference type="PRINTS" id="PR00040">
    <property type="entry name" value="HTHMERR"/>
</dbReference>
<dbReference type="SMART" id="SM00422">
    <property type="entry name" value="HTH_MERR"/>
    <property type="match status" value="1"/>
</dbReference>
<dbReference type="SUPFAM" id="SSF46955">
    <property type="entry name" value="Putative DNA-binding domain"/>
    <property type="match status" value="1"/>
</dbReference>
<dbReference type="PROSITE" id="PS00552">
    <property type="entry name" value="HTH_MERR_1"/>
    <property type="match status" value="1"/>
</dbReference>
<dbReference type="PROSITE" id="PS50937">
    <property type="entry name" value="HTH_MERR_2"/>
    <property type="match status" value="1"/>
</dbReference>
<accession>Q8FK74</accession>
<reference key="1">
    <citation type="journal article" date="2002" name="Proc. Natl. Acad. Sci. U.S.A.">
        <title>Extensive mosaic structure revealed by the complete genome sequence of uropathogenic Escherichia coli.</title>
        <authorList>
            <person name="Welch R.A."/>
            <person name="Burland V."/>
            <person name="Plunkett G. III"/>
            <person name="Redford P."/>
            <person name="Roesch P."/>
            <person name="Rasko D."/>
            <person name="Buckles E.L."/>
            <person name="Liou S.-R."/>
            <person name="Boutin A."/>
            <person name="Hackett J."/>
            <person name="Stroud D."/>
            <person name="Mayhew G.F."/>
            <person name="Rose D.J."/>
            <person name="Zhou S."/>
            <person name="Schwartz D.C."/>
            <person name="Perna N.T."/>
            <person name="Mobley H.L.T."/>
            <person name="Donnenberg M.S."/>
            <person name="Blattner F.R."/>
        </authorList>
    </citation>
    <scope>NUCLEOTIDE SEQUENCE [LARGE SCALE GENOMIC DNA]</scope>
    <source>
        <strain>CFT073 / ATCC 700928 / UPEC</strain>
    </source>
</reference>
<sequence>MNISDVAKITGLTSKAIRFYEEKGLVTPPMRSENGYRTYTQQHLNELTLLRQARQVGFNLEESGELVNLFNDPQRHSADVKRRTLEKVAEIEQHIEELQSMRNQLLALANACPGDDSADCPIIENLSGCCHHRAG</sequence>
<gene>
    <name type="primary">cueR</name>
    <name type="ordered locus">c0607</name>
</gene>
<protein>
    <recommendedName>
        <fullName>HTH-type transcriptional regulator CueR</fullName>
    </recommendedName>
    <alternativeName>
        <fullName>Copper efflux regulator</fullName>
    </alternativeName>
    <alternativeName>
        <fullName>Copper export regulator</fullName>
    </alternativeName>
</protein>
<feature type="chain" id="PRO_0000098112" description="HTH-type transcriptional regulator CueR">
    <location>
        <begin position="1"/>
        <end position="135"/>
    </location>
</feature>
<feature type="domain" description="HTH merR-type" evidence="2">
    <location>
        <begin position="1"/>
        <end position="69"/>
    </location>
</feature>
<feature type="DNA-binding region" description="H-T-H motif" evidence="2">
    <location>
        <begin position="4"/>
        <end position="23"/>
    </location>
</feature>
<feature type="binding site" evidence="1">
    <location>
        <position position="112"/>
    </location>
    <ligand>
        <name>Cu(+)</name>
        <dbReference type="ChEBI" id="CHEBI:49552"/>
    </ligand>
</feature>
<feature type="binding site" evidence="1">
    <location>
        <position position="120"/>
    </location>
    <ligand>
        <name>Cu(+)</name>
        <dbReference type="ChEBI" id="CHEBI:49552"/>
    </ligand>
</feature>
<evidence type="ECO:0000250" key="1"/>
<evidence type="ECO:0000255" key="2">
    <source>
        <dbReference type="PROSITE-ProRule" id="PRU00254"/>
    </source>
</evidence>
<evidence type="ECO:0000305" key="3"/>